<comment type="function">
    <text evidence="1">Binds to the 23S rRNA.</text>
</comment>
<comment type="cofactor">
    <cofactor evidence="1">
        <name>Zn(2+)</name>
        <dbReference type="ChEBI" id="CHEBI:29105"/>
    </cofactor>
    <text evidence="1">Binds 1 zinc ion per subunit.</text>
</comment>
<comment type="subunit">
    <text evidence="1">Part of the 50S ribosomal subunit.</text>
</comment>
<comment type="similarity">
    <text evidence="1">Belongs to the eukaryotic ribosomal protein eL42 family.</text>
</comment>
<evidence type="ECO:0000255" key="1">
    <source>
        <dbReference type="HAMAP-Rule" id="MF_01476"/>
    </source>
</evidence>
<evidence type="ECO:0000305" key="2"/>
<feature type="chain" id="PRO_0000149153" description="Large ribosomal subunit protein eL42">
    <location>
        <begin position="1"/>
        <end position="94"/>
    </location>
</feature>
<feature type="zinc finger region" description="C4-type" evidence="1">
    <location>
        <begin position="11"/>
        <end position="74"/>
    </location>
</feature>
<feature type="binding site" evidence="1">
    <location>
        <position position="11"/>
    </location>
    <ligand>
        <name>Zn(2+)</name>
        <dbReference type="ChEBI" id="CHEBI:29105"/>
    </ligand>
</feature>
<feature type="binding site" evidence="1">
    <location>
        <position position="14"/>
    </location>
    <ligand>
        <name>Zn(2+)</name>
        <dbReference type="ChEBI" id="CHEBI:29105"/>
    </ligand>
</feature>
<feature type="binding site" evidence="1">
    <location>
        <position position="71"/>
    </location>
    <ligand>
        <name>Zn(2+)</name>
        <dbReference type="ChEBI" id="CHEBI:29105"/>
    </ligand>
</feature>
<feature type="binding site" evidence="1">
    <location>
        <position position="74"/>
    </location>
    <ligand>
        <name>Zn(2+)</name>
        <dbReference type="ChEBI" id="CHEBI:29105"/>
    </ligand>
</feature>
<gene>
    <name evidence="1" type="primary">rpl44e</name>
    <name type="ordered locus">PYRAB17150</name>
    <name type="ORF">PAB1221</name>
</gene>
<accession>Q9UXZ2</accession>
<accession>G8ZK80</accession>
<proteinExistence type="inferred from homology"/>
<reference key="1">
    <citation type="journal article" date="2003" name="Mol. Microbiol.">
        <title>An integrated analysis of the genome of the hyperthermophilic archaeon Pyrococcus abyssi.</title>
        <authorList>
            <person name="Cohen G.N."/>
            <person name="Barbe V."/>
            <person name="Flament D."/>
            <person name="Galperin M."/>
            <person name="Heilig R."/>
            <person name="Lecompte O."/>
            <person name="Poch O."/>
            <person name="Prieur D."/>
            <person name="Querellou J."/>
            <person name="Ripp R."/>
            <person name="Thierry J.-C."/>
            <person name="Van der Oost J."/>
            <person name="Weissenbach J."/>
            <person name="Zivanovic Y."/>
            <person name="Forterre P."/>
        </authorList>
    </citation>
    <scope>NUCLEOTIDE SEQUENCE [LARGE SCALE GENOMIC DNA]</scope>
    <source>
        <strain>GE5 / Orsay</strain>
    </source>
</reference>
<reference key="2">
    <citation type="journal article" date="2012" name="Curr. Microbiol.">
        <title>Re-annotation of two hyperthermophilic archaea Pyrococcus abyssi GE5 and Pyrococcus furiosus DSM 3638.</title>
        <authorList>
            <person name="Gao J."/>
            <person name="Wang J."/>
        </authorList>
    </citation>
    <scope>GENOME REANNOTATION</scope>
    <source>
        <strain>GE5 / Orsay</strain>
    </source>
</reference>
<name>RL44E_PYRAB</name>
<protein>
    <recommendedName>
        <fullName evidence="1">Large ribosomal subunit protein eL42</fullName>
    </recommendedName>
    <alternativeName>
        <fullName evidence="2">50S ribosomal protein L44e</fullName>
    </alternativeName>
</protein>
<keyword id="KW-0479">Metal-binding</keyword>
<keyword id="KW-0687">Ribonucleoprotein</keyword>
<keyword id="KW-0689">Ribosomal protein</keyword>
<keyword id="KW-0694">RNA-binding</keyword>
<keyword id="KW-0699">rRNA-binding</keyword>
<keyword id="KW-0862">Zinc</keyword>
<keyword id="KW-0863">Zinc-finger</keyword>
<sequence length="94" mass="11241">MKYPKQIRTYCPFCKRHTIHKVERVKKRPRSELSAGQRRFRRILKGYGGFPRPKPEGREKPVKKLDLRFRCTVCGKAHTRGRGFRVKKFELVEV</sequence>
<dbReference type="EMBL" id="AJ248288">
    <property type="protein sequence ID" value="CAB50620.1"/>
    <property type="molecule type" value="Genomic_DNA"/>
</dbReference>
<dbReference type="EMBL" id="HE613800">
    <property type="protein sequence ID" value="CCE71187.1"/>
    <property type="molecule type" value="Genomic_DNA"/>
</dbReference>
<dbReference type="PIR" id="F75022">
    <property type="entry name" value="F75022"/>
</dbReference>
<dbReference type="RefSeq" id="WP_010868833.1">
    <property type="nucleotide sequence ID" value="NC_000868.1"/>
</dbReference>
<dbReference type="SMR" id="Q9UXZ2"/>
<dbReference type="STRING" id="272844.PAB1221"/>
<dbReference type="KEGG" id="pab:PAB1221"/>
<dbReference type="PATRIC" id="fig|272844.11.peg.1832"/>
<dbReference type="eggNOG" id="arCOG04109">
    <property type="taxonomic scope" value="Archaea"/>
</dbReference>
<dbReference type="HOGENOM" id="CLU_114645_3_0_2"/>
<dbReference type="OrthoDB" id="52456at2157"/>
<dbReference type="PhylomeDB" id="Q9UXZ2"/>
<dbReference type="Proteomes" id="UP000000810">
    <property type="component" value="Chromosome"/>
</dbReference>
<dbReference type="Proteomes" id="UP000009139">
    <property type="component" value="Chromosome"/>
</dbReference>
<dbReference type="GO" id="GO:1990904">
    <property type="term" value="C:ribonucleoprotein complex"/>
    <property type="evidence" value="ECO:0007669"/>
    <property type="project" value="UniProtKB-KW"/>
</dbReference>
<dbReference type="GO" id="GO:0005840">
    <property type="term" value="C:ribosome"/>
    <property type="evidence" value="ECO:0007669"/>
    <property type="project" value="UniProtKB-KW"/>
</dbReference>
<dbReference type="GO" id="GO:0070180">
    <property type="term" value="F:large ribosomal subunit rRNA binding"/>
    <property type="evidence" value="ECO:0007669"/>
    <property type="project" value="UniProtKB-UniRule"/>
</dbReference>
<dbReference type="GO" id="GO:0003735">
    <property type="term" value="F:structural constituent of ribosome"/>
    <property type="evidence" value="ECO:0007669"/>
    <property type="project" value="InterPro"/>
</dbReference>
<dbReference type="GO" id="GO:0008270">
    <property type="term" value="F:zinc ion binding"/>
    <property type="evidence" value="ECO:0007669"/>
    <property type="project" value="UniProtKB-UniRule"/>
</dbReference>
<dbReference type="GO" id="GO:0006412">
    <property type="term" value="P:translation"/>
    <property type="evidence" value="ECO:0007669"/>
    <property type="project" value="UniProtKB-UniRule"/>
</dbReference>
<dbReference type="FunFam" id="3.10.450.80:FF:000001">
    <property type="entry name" value="60S ribosomal protein L44"/>
    <property type="match status" value="1"/>
</dbReference>
<dbReference type="Gene3D" id="3.10.450.80">
    <property type="match status" value="1"/>
</dbReference>
<dbReference type="HAMAP" id="MF_01476">
    <property type="entry name" value="Ribosomal_L44e"/>
    <property type="match status" value="1"/>
</dbReference>
<dbReference type="InterPro" id="IPR000552">
    <property type="entry name" value="Ribosomal_eL44"/>
</dbReference>
<dbReference type="InterPro" id="IPR053708">
    <property type="entry name" value="Ribosomal_LSU_eL42"/>
</dbReference>
<dbReference type="InterPro" id="IPR011332">
    <property type="entry name" value="Ribosomal_zn-bd"/>
</dbReference>
<dbReference type="NCBIfam" id="NF004425">
    <property type="entry name" value="PRK05767.1"/>
    <property type="match status" value="1"/>
</dbReference>
<dbReference type="PANTHER" id="PTHR10369">
    <property type="entry name" value="60S RIBOSOMAL PROTEIN L36A/L44"/>
    <property type="match status" value="1"/>
</dbReference>
<dbReference type="Pfam" id="PF00935">
    <property type="entry name" value="Ribosomal_L44"/>
    <property type="match status" value="1"/>
</dbReference>
<dbReference type="SUPFAM" id="SSF57829">
    <property type="entry name" value="Zn-binding ribosomal proteins"/>
    <property type="match status" value="1"/>
</dbReference>
<dbReference type="PROSITE" id="PS01172">
    <property type="entry name" value="RIBOSOMAL_L44E"/>
    <property type="match status" value="1"/>
</dbReference>
<organism>
    <name type="scientific">Pyrococcus abyssi (strain GE5 / Orsay)</name>
    <dbReference type="NCBI Taxonomy" id="272844"/>
    <lineage>
        <taxon>Archaea</taxon>
        <taxon>Methanobacteriati</taxon>
        <taxon>Methanobacteriota</taxon>
        <taxon>Thermococci</taxon>
        <taxon>Thermococcales</taxon>
        <taxon>Thermococcaceae</taxon>
        <taxon>Pyrococcus</taxon>
    </lineage>
</organism>